<name>DUT_NITHX</name>
<reference key="1">
    <citation type="submission" date="2006-03" db="EMBL/GenBank/DDBJ databases">
        <title>Complete sequence of chromosome of Nitrobacter hamburgensis X14.</title>
        <authorList>
            <consortium name="US DOE Joint Genome Institute"/>
            <person name="Copeland A."/>
            <person name="Lucas S."/>
            <person name="Lapidus A."/>
            <person name="Barry K."/>
            <person name="Detter J.C."/>
            <person name="Glavina del Rio T."/>
            <person name="Hammon N."/>
            <person name="Israni S."/>
            <person name="Dalin E."/>
            <person name="Tice H."/>
            <person name="Pitluck S."/>
            <person name="Chain P."/>
            <person name="Malfatti S."/>
            <person name="Shin M."/>
            <person name="Vergez L."/>
            <person name="Schmutz J."/>
            <person name="Larimer F."/>
            <person name="Land M."/>
            <person name="Hauser L."/>
            <person name="Kyrpides N."/>
            <person name="Ivanova N."/>
            <person name="Ward B."/>
            <person name="Arp D."/>
            <person name="Klotz M."/>
            <person name="Stein L."/>
            <person name="O'Mullan G."/>
            <person name="Starkenburg S."/>
            <person name="Sayavedra L."/>
            <person name="Poret-Peterson A.T."/>
            <person name="Gentry M.E."/>
            <person name="Bruce D."/>
            <person name="Richardson P."/>
        </authorList>
    </citation>
    <scope>NUCLEOTIDE SEQUENCE [LARGE SCALE GENOMIC DNA]</scope>
    <source>
        <strain>DSM 10229 / NCIMB 13809 / X14</strain>
    </source>
</reference>
<keyword id="KW-0378">Hydrolase</keyword>
<keyword id="KW-0460">Magnesium</keyword>
<keyword id="KW-0479">Metal-binding</keyword>
<keyword id="KW-0546">Nucleotide metabolism</keyword>
<keyword id="KW-1185">Reference proteome</keyword>
<gene>
    <name evidence="1" type="primary">dut</name>
    <name type="ordered locus">Nham_0052</name>
</gene>
<feature type="chain" id="PRO_1000015492" description="Deoxyuridine 5'-triphosphate nucleotidohydrolase">
    <location>
        <begin position="1"/>
        <end position="152"/>
    </location>
</feature>
<feature type="binding site" evidence="1">
    <location>
        <begin position="72"/>
        <end position="74"/>
    </location>
    <ligand>
        <name>substrate</name>
    </ligand>
</feature>
<feature type="binding site" evidence="1">
    <location>
        <position position="85"/>
    </location>
    <ligand>
        <name>substrate</name>
    </ligand>
</feature>
<feature type="binding site" evidence="1">
    <location>
        <begin position="89"/>
        <end position="91"/>
    </location>
    <ligand>
        <name>substrate</name>
    </ligand>
</feature>
<organism>
    <name type="scientific">Nitrobacter hamburgensis (strain DSM 10229 / NCIMB 13809 / X14)</name>
    <dbReference type="NCBI Taxonomy" id="323097"/>
    <lineage>
        <taxon>Bacteria</taxon>
        <taxon>Pseudomonadati</taxon>
        <taxon>Pseudomonadota</taxon>
        <taxon>Alphaproteobacteria</taxon>
        <taxon>Hyphomicrobiales</taxon>
        <taxon>Nitrobacteraceae</taxon>
        <taxon>Nitrobacter</taxon>
    </lineage>
</organism>
<comment type="function">
    <text evidence="1">This enzyme is involved in nucleotide metabolism: it produces dUMP, the immediate precursor of thymidine nucleotides and it decreases the intracellular concentration of dUTP so that uracil cannot be incorporated into DNA.</text>
</comment>
<comment type="catalytic activity">
    <reaction evidence="1">
        <text>dUTP + H2O = dUMP + diphosphate + H(+)</text>
        <dbReference type="Rhea" id="RHEA:10248"/>
        <dbReference type="ChEBI" id="CHEBI:15377"/>
        <dbReference type="ChEBI" id="CHEBI:15378"/>
        <dbReference type="ChEBI" id="CHEBI:33019"/>
        <dbReference type="ChEBI" id="CHEBI:61555"/>
        <dbReference type="ChEBI" id="CHEBI:246422"/>
        <dbReference type="EC" id="3.6.1.23"/>
    </reaction>
</comment>
<comment type="cofactor">
    <cofactor evidence="1">
        <name>Mg(2+)</name>
        <dbReference type="ChEBI" id="CHEBI:18420"/>
    </cofactor>
</comment>
<comment type="pathway">
    <text evidence="1">Pyrimidine metabolism; dUMP biosynthesis; dUMP from dCTP (dUTP route): step 2/2.</text>
</comment>
<comment type="similarity">
    <text evidence="1">Belongs to the dUTPase family.</text>
</comment>
<protein>
    <recommendedName>
        <fullName evidence="1">Deoxyuridine 5'-triphosphate nucleotidohydrolase</fullName>
        <shortName evidence="1">dUTPase</shortName>
        <ecNumber evidence="1">3.6.1.23</ecNumber>
    </recommendedName>
    <alternativeName>
        <fullName evidence="1">dUTP pyrophosphatase</fullName>
    </alternativeName>
</protein>
<sequence>MSGAIRIDAQQLPHAEGLPLPAYHSSQAAGLDLMAAVPEQTPLVLAAGQYAMVPTGLIIALPDGFEAQVRPRSGLAAKHGVTVLNSPGTVDADYRGEINVLLVNLGNAPFTIRRGERIAQMIVAPVTRVELARAVSLSATSRGSGGFGSTGR</sequence>
<accession>Q1QS44</accession>
<evidence type="ECO:0000255" key="1">
    <source>
        <dbReference type="HAMAP-Rule" id="MF_00116"/>
    </source>
</evidence>
<dbReference type="EC" id="3.6.1.23" evidence="1"/>
<dbReference type="EMBL" id="CP000319">
    <property type="protein sequence ID" value="ABE60953.1"/>
    <property type="molecule type" value="Genomic_DNA"/>
</dbReference>
<dbReference type="RefSeq" id="WP_011508660.1">
    <property type="nucleotide sequence ID" value="NC_007964.1"/>
</dbReference>
<dbReference type="SMR" id="Q1QS44"/>
<dbReference type="STRING" id="323097.Nham_0052"/>
<dbReference type="KEGG" id="nha:Nham_0052"/>
<dbReference type="eggNOG" id="COG0756">
    <property type="taxonomic scope" value="Bacteria"/>
</dbReference>
<dbReference type="HOGENOM" id="CLU_068508_1_2_5"/>
<dbReference type="OrthoDB" id="9809956at2"/>
<dbReference type="UniPathway" id="UPA00610">
    <property type="reaction ID" value="UER00666"/>
</dbReference>
<dbReference type="Proteomes" id="UP000001953">
    <property type="component" value="Chromosome"/>
</dbReference>
<dbReference type="GO" id="GO:0004170">
    <property type="term" value="F:dUTP diphosphatase activity"/>
    <property type="evidence" value="ECO:0007669"/>
    <property type="project" value="UniProtKB-UniRule"/>
</dbReference>
<dbReference type="GO" id="GO:0000287">
    <property type="term" value="F:magnesium ion binding"/>
    <property type="evidence" value="ECO:0007669"/>
    <property type="project" value="UniProtKB-UniRule"/>
</dbReference>
<dbReference type="GO" id="GO:0006226">
    <property type="term" value="P:dUMP biosynthetic process"/>
    <property type="evidence" value="ECO:0007669"/>
    <property type="project" value="UniProtKB-UniRule"/>
</dbReference>
<dbReference type="GO" id="GO:0046081">
    <property type="term" value="P:dUTP catabolic process"/>
    <property type="evidence" value="ECO:0007669"/>
    <property type="project" value="InterPro"/>
</dbReference>
<dbReference type="CDD" id="cd07557">
    <property type="entry name" value="trimeric_dUTPase"/>
    <property type="match status" value="1"/>
</dbReference>
<dbReference type="Gene3D" id="2.70.40.10">
    <property type="match status" value="1"/>
</dbReference>
<dbReference type="HAMAP" id="MF_00116">
    <property type="entry name" value="dUTPase_bact"/>
    <property type="match status" value="1"/>
</dbReference>
<dbReference type="InterPro" id="IPR008181">
    <property type="entry name" value="dUTPase"/>
</dbReference>
<dbReference type="InterPro" id="IPR029054">
    <property type="entry name" value="dUTPase-like"/>
</dbReference>
<dbReference type="InterPro" id="IPR036157">
    <property type="entry name" value="dUTPase-like_sf"/>
</dbReference>
<dbReference type="InterPro" id="IPR033704">
    <property type="entry name" value="dUTPase_trimeric"/>
</dbReference>
<dbReference type="NCBIfam" id="TIGR00576">
    <property type="entry name" value="dut"/>
    <property type="match status" value="1"/>
</dbReference>
<dbReference type="NCBIfam" id="NF001862">
    <property type="entry name" value="PRK00601.1"/>
    <property type="match status" value="1"/>
</dbReference>
<dbReference type="PANTHER" id="PTHR11241">
    <property type="entry name" value="DEOXYURIDINE 5'-TRIPHOSPHATE NUCLEOTIDOHYDROLASE"/>
    <property type="match status" value="1"/>
</dbReference>
<dbReference type="PANTHER" id="PTHR11241:SF0">
    <property type="entry name" value="DEOXYURIDINE 5'-TRIPHOSPHATE NUCLEOTIDOHYDROLASE"/>
    <property type="match status" value="1"/>
</dbReference>
<dbReference type="Pfam" id="PF00692">
    <property type="entry name" value="dUTPase"/>
    <property type="match status" value="1"/>
</dbReference>
<dbReference type="SUPFAM" id="SSF51283">
    <property type="entry name" value="dUTPase-like"/>
    <property type="match status" value="1"/>
</dbReference>
<proteinExistence type="inferred from homology"/>